<evidence type="ECO:0000255" key="1">
    <source>
        <dbReference type="HAMAP-Rule" id="MF_01710"/>
    </source>
</evidence>
<feature type="chain" id="PRO_0000287935" description="Energy-coupling factor transporter ATP-binding protein EcfA2">
    <location>
        <begin position="1"/>
        <end position="285"/>
    </location>
</feature>
<feature type="domain" description="ABC transporter" evidence="1">
    <location>
        <begin position="6"/>
        <end position="242"/>
    </location>
</feature>
<feature type="binding site" evidence="1">
    <location>
        <begin position="39"/>
        <end position="46"/>
    </location>
    <ligand>
        <name>ATP</name>
        <dbReference type="ChEBI" id="CHEBI:30616"/>
    </ligand>
</feature>
<gene>
    <name evidence="1" type="primary">ecfA2</name>
    <name type="synonym">cbiO2</name>
    <name type="ordered locus">CPR_0185</name>
</gene>
<dbReference type="EC" id="7.-.-.-" evidence="1"/>
<dbReference type="EMBL" id="CP000312">
    <property type="protein sequence ID" value="ABG85580.1"/>
    <property type="molecule type" value="Genomic_DNA"/>
</dbReference>
<dbReference type="RefSeq" id="WP_011591332.1">
    <property type="nucleotide sequence ID" value="NC_008262.1"/>
</dbReference>
<dbReference type="SMR" id="Q0SWH9"/>
<dbReference type="KEGG" id="cpr:CPR_0185"/>
<dbReference type="Proteomes" id="UP000001824">
    <property type="component" value="Chromosome"/>
</dbReference>
<dbReference type="GO" id="GO:0043190">
    <property type="term" value="C:ATP-binding cassette (ABC) transporter complex"/>
    <property type="evidence" value="ECO:0007669"/>
    <property type="project" value="TreeGrafter"/>
</dbReference>
<dbReference type="GO" id="GO:0005524">
    <property type="term" value="F:ATP binding"/>
    <property type="evidence" value="ECO:0007669"/>
    <property type="project" value="UniProtKB-KW"/>
</dbReference>
<dbReference type="GO" id="GO:0016887">
    <property type="term" value="F:ATP hydrolysis activity"/>
    <property type="evidence" value="ECO:0007669"/>
    <property type="project" value="InterPro"/>
</dbReference>
<dbReference type="GO" id="GO:0042626">
    <property type="term" value="F:ATPase-coupled transmembrane transporter activity"/>
    <property type="evidence" value="ECO:0007669"/>
    <property type="project" value="TreeGrafter"/>
</dbReference>
<dbReference type="GO" id="GO:0006824">
    <property type="term" value="P:cobalt ion transport"/>
    <property type="evidence" value="ECO:0007669"/>
    <property type="project" value="InterPro"/>
</dbReference>
<dbReference type="CDD" id="cd03225">
    <property type="entry name" value="ABC_cobalt_CbiO_domain1"/>
    <property type="match status" value="1"/>
</dbReference>
<dbReference type="FunFam" id="3.40.50.300:FF:000224">
    <property type="entry name" value="Energy-coupling factor transporter ATP-binding protein EcfA"/>
    <property type="match status" value="1"/>
</dbReference>
<dbReference type="Gene3D" id="3.40.50.300">
    <property type="entry name" value="P-loop containing nucleotide triphosphate hydrolases"/>
    <property type="match status" value="1"/>
</dbReference>
<dbReference type="InterPro" id="IPR003593">
    <property type="entry name" value="AAA+_ATPase"/>
</dbReference>
<dbReference type="InterPro" id="IPR003439">
    <property type="entry name" value="ABC_transporter-like_ATP-bd"/>
</dbReference>
<dbReference type="InterPro" id="IPR017871">
    <property type="entry name" value="ABC_transporter-like_CS"/>
</dbReference>
<dbReference type="InterPro" id="IPR015856">
    <property type="entry name" value="ABC_transpr_CbiO/EcfA_su"/>
</dbReference>
<dbReference type="InterPro" id="IPR005876">
    <property type="entry name" value="Co_trans_ATP-bd"/>
</dbReference>
<dbReference type="InterPro" id="IPR050095">
    <property type="entry name" value="ECF_ABC_transporter_ATP-bd"/>
</dbReference>
<dbReference type="InterPro" id="IPR027417">
    <property type="entry name" value="P-loop_NTPase"/>
</dbReference>
<dbReference type="NCBIfam" id="TIGR01166">
    <property type="entry name" value="cbiO"/>
    <property type="match status" value="1"/>
</dbReference>
<dbReference type="NCBIfam" id="NF010157">
    <property type="entry name" value="PRK13636.1"/>
    <property type="match status" value="1"/>
</dbReference>
<dbReference type="PANTHER" id="PTHR43553:SF24">
    <property type="entry name" value="ENERGY-COUPLING FACTOR TRANSPORTER ATP-BINDING PROTEIN ECFA1"/>
    <property type="match status" value="1"/>
</dbReference>
<dbReference type="PANTHER" id="PTHR43553">
    <property type="entry name" value="HEAVY METAL TRANSPORTER"/>
    <property type="match status" value="1"/>
</dbReference>
<dbReference type="Pfam" id="PF00005">
    <property type="entry name" value="ABC_tran"/>
    <property type="match status" value="1"/>
</dbReference>
<dbReference type="SMART" id="SM00382">
    <property type="entry name" value="AAA"/>
    <property type="match status" value="1"/>
</dbReference>
<dbReference type="SUPFAM" id="SSF52540">
    <property type="entry name" value="P-loop containing nucleoside triphosphate hydrolases"/>
    <property type="match status" value="1"/>
</dbReference>
<dbReference type="PROSITE" id="PS00211">
    <property type="entry name" value="ABC_TRANSPORTER_1"/>
    <property type="match status" value="1"/>
</dbReference>
<dbReference type="PROSITE" id="PS50893">
    <property type="entry name" value="ABC_TRANSPORTER_2"/>
    <property type="match status" value="1"/>
</dbReference>
<dbReference type="PROSITE" id="PS51246">
    <property type="entry name" value="CBIO"/>
    <property type="match status" value="1"/>
</dbReference>
<comment type="function">
    <text evidence="1">ATP-binding (A) component of a common energy-coupling factor (ECF) ABC-transporter complex. Unlike classic ABC transporters this ECF transporter provides the energy necessary to transport a number of different substrates.</text>
</comment>
<comment type="subunit">
    <text evidence="1">Forms a stable energy-coupling factor (ECF) transporter complex composed of 2 membrane-embedded substrate-binding proteins (S component), 2 ATP-binding proteins (A component) and 2 transmembrane proteins (T component).</text>
</comment>
<comment type="subcellular location">
    <subcellularLocation>
        <location evidence="1">Cell membrane</location>
        <topology evidence="1">Peripheral membrane protein</topology>
    </subcellularLocation>
</comment>
<comment type="similarity">
    <text evidence="1">Belongs to the ABC transporter superfamily. Energy-coupling factor EcfA family.</text>
</comment>
<accession>Q0SWH9</accession>
<keyword id="KW-0067">ATP-binding</keyword>
<keyword id="KW-1003">Cell membrane</keyword>
<keyword id="KW-0472">Membrane</keyword>
<keyword id="KW-0547">Nucleotide-binding</keyword>
<keyword id="KW-1278">Translocase</keyword>
<keyword id="KW-0813">Transport</keyword>
<sequence length="285" mass="32113">MEDYILKVEELNYNYSDGTHALKGINMNIKRGEVTAILGGNGVGKSTLFQNFNGILKPSSGRILFDNKPIDYSRKGIMKLRESIGIVFQDPDNQLFSASVYQDVSFGAVNMKLPEDEIRKRVDNALKRTGIEHLKNKPTHCLSFGQKKRVAIAGVLVMEPKVLILDEPTAGLDPMGVSEIMKLLVEMQKELGITIIIATHDIDIVPLYCDNVFVMKEGRVILQGNPKEVFAEKEVIRKVNLRLPRIGHLMEILKEKDGFVFDELDLTIGQARKTINSWKNKIFND</sequence>
<organism>
    <name type="scientific">Clostridium perfringens (strain SM101 / Type A)</name>
    <dbReference type="NCBI Taxonomy" id="289380"/>
    <lineage>
        <taxon>Bacteria</taxon>
        <taxon>Bacillati</taxon>
        <taxon>Bacillota</taxon>
        <taxon>Clostridia</taxon>
        <taxon>Eubacteriales</taxon>
        <taxon>Clostridiaceae</taxon>
        <taxon>Clostridium</taxon>
    </lineage>
</organism>
<name>ECFA2_CLOPS</name>
<protein>
    <recommendedName>
        <fullName evidence="1">Energy-coupling factor transporter ATP-binding protein EcfA2</fullName>
        <shortName evidence="1">ECF transporter A component EcfA2</shortName>
        <ecNumber evidence="1">7.-.-.-</ecNumber>
    </recommendedName>
</protein>
<proteinExistence type="inferred from homology"/>
<reference key="1">
    <citation type="journal article" date="2006" name="Genome Res.">
        <title>Skewed genomic variability in strains of the toxigenic bacterial pathogen, Clostridium perfringens.</title>
        <authorList>
            <person name="Myers G.S.A."/>
            <person name="Rasko D.A."/>
            <person name="Cheung J.K."/>
            <person name="Ravel J."/>
            <person name="Seshadri R."/>
            <person name="DeBoy R.T."/>
            <person name="Ren Q."/>
            <person name="Varga J."/>
            <person name="Awad M.M."/>
            <person name="Brinkac L.M."/>
            <person name="Daugherty S.C."/>
            <person name="Haft D.H."/>
            <person name="Dodson R.J."/>
            <person name="Madupu R."/>
            <person name="Nelson W.C."/>
            <person name="Rosovitz M.J."/>
            <person name="Sullivan S.A."/>
            <person name="Khouri H."/>
            <person name="Dimitrov G.I."/>
            <person name="Watkins K.L."/>
            <person name="Mulligan S."/>
            <person name="Benton J."/>
            <person name="Radune D."/>
            <person name="Fisher D.J."/>
            <person name="Atkins H.S."/>
            <person name="Hiscox T."/>
            <person name="Jost B.H."/>
            <person name="Billington S.J."/>
            <person name="Songer J.G."/>
            <person name="McClane B.A."/>
            <person name="Titball R.W."/>
            <person name="Rood J.I."/>
            <person name="Melville S.B."/>
            <person name="Paulsen I.T."/>
        </authorList>
    </citation>
    <scope>NUCLEOTIDE SEQUENCE [LARGE SCALE GENOMIC DNA]</scope>
    <source>
        <strain>SM101 / Type A</strain>
    </source>
</reference>